<sequence>MRSFGRTGGRPLSPRQKTLMAEKLDTYRIAEGDGPLDLCAMFPGKEAFWLEIGFGGAEHMIAQAAQNPDVGIIGCEPFLEGIAKALGGIEETDLNNVRVWPDDARPLIARMPDQCLDRAFVLFPDPWPKRRQHKRRLVQADFLSILHPKMKPGARLRFATDVKSYADEALLTFVSDGRFEWLAASPDDWRCPPQDHVTTRYESKRLGDCKPVWFDFRIR</sequence>
<keyword id="KW-0489">Methyltransferase</keyword>
<keyword id="KW-1185">Reference proteome</keyword>
<keyword id="KW-0949">S-adenosyl-L-methionine</keyword>
<keyword id="KW-0808">Transferase</keyword>
<keyword id="KW-0819">tRNA processing</keyword>
<accession>Q0C600</accession>
<evidence type="ECO:0000250" key="1"/>
<evidence type="ECO:0000255" key="2">
    <source>
        <dbReference type="HAMAP-Rule" id="MF_01057"/>
    </source>
</evidence>
<organism>
    <name type="scientific">Hyphomonas neptunium (strain ATCC 15444)</name>
    <dbReference type="NCBI Taxonomy" id="228405"/>
    <lineage>
        <taxon>Bacteria</taxon>
        <taxon>Pseudomonadati</taxon>
        <taxon>Pseudomonadota</taxon>
        <taxon>Alphaproteobacteria</taxon>
        <taxon>Hyphomonadales</taxon>
        <taxon>Hyphomonadaceae</taxon>
        <taxon>Hyphomonas</taxon>
    </lineage>
</organism>
<gene>
    <name evidence="2" type="primary">trmB</name>
    <name type="ordered locus">HNE_0109</name>
</gene>
<reference key="1">
    <citation type="journal article" date="2006" name="J. Bacteriol.">
        <title>Comparative genomic evidence for a close relationship between the dimorphic prosthecate bacteria Hyphomonas neptunium and Caulobacter crescentus.</title>
        <authorList>
            <person name="Badger J.H."/>
            <person name="Hoover T.R."/>
            <person name="Brun Y.V."/>
            <person name="Weiner R.M."/>
            <person name="Laub M.T."/>
            <person name="Alexandre G."/>
            <person name="Mrazek J."/>
            <person name="Ren Q."/>
            <person name="Paulsen I.T."/>
            <person name="Nelson K.E."/>
            <person name="Khouri H.M."/>
            <person name="Radune D."/>
            <person name="Sosa J."/>
            <person name="Dodson R.J."/>
            <person name="Sullivan S.A."/>
            <person name="Rosovitz M.J."/>
            <person name="Madupu R."/>
            <person name="Brinkac L.M."/>
            <person name="Durkin A.S."/>
            <person name="Daugherty S.C."/>
            <person name="Kothari S.P."/>
            <person name="Giglio M.G."/>
            <person name="Zhou L."/>
            <person name="Haft D.H."/>
            <person name="Selengut J.D."/>
            <person name="Davidsen T.M."/>
            <person name="Yang Q."/>
            <person name="Zafar N."/>
            <person name="Ward N.L."/>
        </authorList>
    </citation>
    <scope>NUCLEOTIDE SEQUENCE [LARGE SCALE GENOMIC DNA]</scope>
    <source>
        <strain>ATCC 15444</strain>
    </source>
</reference>
<feature type="chain" id="PRO_0000288159" description="tRNA (guanine-N(7)-)-methyltransferase">
    <location>
        <begin position="1"/>
        <end position="219"/>
    </location>
</feature>
<feature type="active site" evidence="1">
    <location>
        <position position="125"/>
    </location>
</feature>
<feature type="binding site" evidence="2">
    <location>
        <position position="51"/>
    </location>
    <ligand>
        <name>S-adenosyl-L-methionine</name>
        <dbReference type="ChEBI" id="CHEBI:59789"/>
    </ligand>
</feature>
<feature type="binding site" evidence="2">
    <location>
        <position position="76"/>
    </location>
    <ligand>
        <name>S-adenosyl-L-methionine</name>
        <dbReference type="ChEBI" id="CHEBI:59789"/>
    </ligand>
</feature>
<feature type="binding site" evidence="2">
    <location>
        <position position="103"/>
    </location>
    <ligand>
        <name>S-adenosyl-L-methionine</name>
        <dbReference type="ChEBI" id="CHEBI:59789"/>
    </ligand>
</feature>
<feature type="binding site" evidence="2">
    <location>
        <position position="125"/>
    </location>
    <ligand>
        <name>S-adenosyl-L-methionine</name>
        <dbReference type="ChEBI" id="CHEBI:59789"/>
    </ligand>
</feature>
<feature type="binding site" evidence="2">
    <location>
        <position position="129"/>
    </location>
    <ligand>
        <name>substrate</name>
    </ligand>
</feature>
<feature type="binding site" evidence="2">
    <location>
        <position position="161"/>
    </location>
    <ligand>
        <name>substrate</name>
    </ligand>
</feature>
<feature type="binding site" evidence="2">
    <location>
        <begin position="199"/>
        <end position="202"/>
    </location>
    <ligand>
        <name>substrate</name>
    </ligand>
</feature>
<comment type="function">
    <text evidence="2">Catalyzes the formation of N(7)-methylguanine at position 46 (m7G46) in tRNA.</text>
</comment>
<comment type="catalytic activity">
    <reaction evidence="2">
        <text>guanosine(46) in tRNA + S-adenosyl-L-methionine = N(7)-methylguanosine(46) in tRNA + S-adenosyl-L-homocysteine</text>
        <dbReference type="Rhea" id="RHEA:42708"/>
        <dbReference type="Rhea" id="RHEA-COMP:10188"/>
        <dbReference type="Rhea" id="RHEA-COMP:10189"/>
        <dbReference type="ChEBI" id="CHEBI:57856"/>
        <dbReference type="ChEBI" id="CHEBI:59789"/>
        <dbReference type="ChEBI" id="CHEBI:74269"/>
        <dbReference type="ChEBI" id="CHEBI:74480"/>
        <dbReference type="EC" id="2.1.1.33"/>
    </reaction>
</comment>
<comment type="pathway">
    <text evidence="2">tRNA modification; N(7)-methylguanine-tRNA biosynthesis.</text>
</comment>
<comment type="similarity">
    <text evidence="2">Belongs to the class I-like SAM-binding methyltransferase superfamily. TrmB family.</text>
</comment>
<name>TRMB_HYPNA</name>
<dbReference type="EC" id="2.1.1.33" evidence="2"/>
<dbReference type="EMBL" id="CP000158">
    <property type="protein sequence ID" value="ABI76398.1"/>
    <property type="molecule type" value="Genomic_DNA"/>
</dbReference>
<dbReference type="SMR" id="Q0C600"/>
<dbReference type="STRING" id="228405.HNE_0109"/>
<dbReference type="KEGG" id="hne:HNE_0109"/>
<dbReference type="eggNOG" id="COG0220">
    <property type="taxonomic scope" value="Bacteria"/>
</dbReference>
<dbReference type="HOGENOM" id="CLU_050910_0_3_5"/>
<dbReference type="UniPathway" id="UPA00989"/>
<dbReference type="Proteomes" id="UP000001959">
    <property type="component" value="Chromosome"/>
</dbReference>
<dbReference type="GO" id="GO:0043527">
    <property type="term" value="C:tRNA methyltransferase complex"/>
    <property type="evidence" value="ECO:0007669"/>
    <property type="project" value="TreeGrafter"/>
</dbReference>
<dbReference type="GO" id="GO:0008176">
    <property type="term" value="F:tRNA (guanine(46)-N7)-methyltransferase activity"/>
    <property type="evidence" value="ECO:0007669"/>
    <property type="project" value="UniProtKB-UniRule"/>
</dbReference>
<dbReference type="Gene3D" id="3.40.50.150">
    <property type="entry name" value="Vaccinia Virus protein VP39"/>
    <property type="match status" value="1"/>
</dbReference>
<dbReference type="HAMAP" id="MF_01057">
    <property type="entry name" value="tRNA_methyltr_TrmB"/>
    <property type="match status" value="1"/>
</dbReference>
<dbReference type="InterPro" id="IPR029063">
    <property type="entry name" value="SAM-dependent_MTases_sf"/>
</dbReference>
<dbReference type="InterPro" id="IPR003358">
    <property type="entry name" value="tRNA_(Gua-N-7)_MeTrfase_Trmb"/>
</dbReference>
<dbReference type="InterPro" id="IPR055361">
    <property type="entry name" value="tRNA_methyltr_TrmB_bact"/>
</dbReference>
<dbReference type="NCBIfam" id="TIGR00091">
    <property type="entry name" value="tRNA (guanosine(46)-N7)-methyltransferase TrmB"/>
    <property type="match status" value="1"/>
</dbReference>
<dbReference type="PANTHER" id="PTHR23417">
    <property type="entry name" value="3-DEOXY-D-MANNO-OCTULOSONIC-ACID TRANSFERASE/TRNA GUANINE-N 7 - -METHYLTRANSFERASE"/>
    <property type="match status" value="1"/>
</dbReference>
<dbReference type="PANTHER" id="PTHR23417:SF14">
    <property type="entry name" value="PENTACOTRIPEPTIDE-REPEAT REGION OF PRORP DOMAIN-CONTAINING PROTEIN"/>
    <property type="match status" value="1"/>
</dbReference>
<dbReference type="Pfam" id="PF02390">
    <property type="entry name" value="Methyltransf_4"/>
    <property type="match status" value="1"/>
</dbReference>
<dbReference type="SUPFAM" id="SSF53335">
    <property type="entry name" value="S-adenosyl-L-methionine-dependent methyltransferases"/>
    <property type="match status" value="1"/>
</dbReference>
<dbReference type="PROSITE" id="PS51625">
    <property type="entry name" value="SAM_MT_TRMB"/>
    <property type="match status" value="1"/>
</dbReference>
<protein>
    <recommendedName>
        <fullName evidence="2">tRNA (guanine-N(7)-)-methyltransferase</fullName>
        <ecNumber evidence="2">2.1.1.33</ecNumber>
    </recommendedName>
    <alternativeName>
        <fullName evidence="2">tRNA (guanine(46)-N(7))-methyltransferase</fullName>
    </alternativeName>
    <alternativeName>
        <fullName evidence="2">tRNA(m7G46)-methyltransferase</fullName>
    </alternativeName>
</protein>
<proteinExistence type="inferred from homology"/>